<accession>Q92185</accession>
<accession>A8K4H6</accession>
<accession>Q17RL0</accession>
<accession>Q6PZN5</accession>
<accession>Q93064</accession>
<organism>
    <name type="scientific">Homo sapiens</name>
    <name type="common">Human</name>
    <dbReference type="NCBI Taxonomy" id="9606"/>
    <lineage>
        <taxon>Eukaryota</taxon>
        <taxon>Metazoa</taxon>
        <taxon>Chordata</taxon>
        <taxon>Craniata</taxon>
        <taxon>Vertebrata</taxon>
        <taxon>Euteleostomi</taxon>
        <taxon>Mammalia</taxon>
        <taxon>Eutheria</taxon>
        <taxon>Euarchontoglires</taxon>
        <taxon>Primates</taxon>
        <taxon>Haplorrhini</taxon>
        <taxon>Catarrhini</taxon>
        <taxon>Hominidae</taxon>
        <taxon>Homo</taxon>
    </lineage>
</organism>
<dbReference type="EC" id="2.4.3.8" evidence="3 4 5 6 7 8 9"/>
<dbReference type="EMBL" id="X77922">
    <property type="protein sequence ID" value="CAA54891.1"/>
    <property type="molecule type" value="mRNA"/>
</dbReference>
<dbReference type="EMBL" id="D26360">
    <property type="protein sequence ID" value="BAA05391.1"/>
    <property type="molecule type" value="mRNA"/>
</dbReference>
<dbReference type="EMBL" id="L32867">
    <property type="protein sequence ID" value="AAA62366.1"/>
    <property type="molecule type" value="mRNA"/>
</dbReference>
<dbReference type="EMBL" id="L43494">
    <property type="protein sequence ID" value="AAC37586.1"/>
    <property type="status" value="ALT_INIT"/>
    <property type="molecule type" value="mRNA"/>
</dbReference>
<dbReference type="EMBL" id="AY569975">
    <property type="protein sequence ID" value="AAS75783.1"/>
    <property type="molecule type" value="mRNA"/>
</dbReference>
<dbReference type="EMBL" id="EU041716">
    <property type="protein sequence ID" value="ABU62753.1"/>
    <property type="molecule type" value="mRNA"/>
</dbReference>
<dbReference type="EMBL" id="AK290941">
    <property type="protein sequence ID" value="BAF83630.1"/>
    <property type="molecule type" value="mRNA"/>
</dbReference>
<dbReference type="EMBL" id="AK315340">
    <property type="protein sequence ID" value="BAG37739.1"/>
    <property type="molecule type" value="mRNA"/>
</dbReference>
<dbReference type="EMBL" id="AC007544">
    <property type="status" value="NOT_ANNOTATED_CDS"/>
    <property type="molecule type" value="Genomic_DNA"/>
</dbReference>
<dbReference type="EMBL" id="AC007671">
    <property type="status" value="NOT_ANNOTATED_CDS"/>
    <property type="molecule type" value="Genomic_DNA"/>
</dbReference>
<dbReference type="EMBL" id="AC053513">
    <property type="status" value="NOT_ANNOTATED_CDS"/>
    <property type="molecule type" value="Genomic_DNA"/>
</dbReference>
<dbReference type="EMBL" id="AC087318">
    <property type="status" value="NOT_ANNOTATED_CDS"/>
    <property type="molecule type" value="Genomic_DNA"/>
</dbReference>
<dbReference type="EMBL" id="AC138468">
    <property type="status" value="NOT_ANNOTATED_CDS"/>
    <property type="molecule type" value="Genomic_DNA"/>
</dbReference>
<dbReference type="EMBL" id="CH471094">
    <property type="protein sequence ID" value="EAW96468.1"/>
    <property type="molecule type" value="Genomic_DNA"/>
</dbReference>
<dbReference type="EMBL" id="BC117285">
    <property type="protein sequence ID" value="AAI17286.1"/>
    <property type="molecule type" value="mRNA"/>
</dbReference>
<dbReference type="EMBL" id="BC126162">
    <property type="protein sequence ID" value="AAI26163.1"/>
    <property type="molecule type" value="mRNA"/>
</dbReference>
<dbReference type="CCDS" id="CCDS8697.1">
    <molecule id="Q92185-1"/>
</dbReference>
<dbReference type="PIR" id="A54032">
    <property type="entry name" value="A54032"/>
</dbReference>
<dbReference type="RefSeq" id="NP_001291379.1">
    <property type="nucleotide sequence ID" value="NM_001304450.1"/>
</dbReference>
<dbReference type="RefSeq" id="NP_003025.1">
    <molecule id="Q92185-1"/>
    <property type="nucleotide sequence ID" value="NM_003034.4"/>
</dbReference>
<dbReference type="SMR" id="Q92185"/>
<dbReference type="BioGRID" id="112380">
    <property type="interactions" value="26"/>
</dbReference>
<dbReference type="FunCoup" id="Q92185">
    <property type="interactions" value="204"/>
</dbReference>
<dbReference type="IntAct" id="Q92185">
    <property type="interactions" value="18"/>
</dbReference>
<dbReference type="STRING" id="9606.ENSP00000379353"/>
<dbReference type="SwissLipids" id="SLP:000000749"/>
<dbReference type="SwissLipids" id="SLP:000000871"/>
<dbReference type="CAZy" id="GT29">
    <property type="family name" value="Glycosyltransferase Family 29"/>
</dbReference>
<dbReference type="GlyCosmos" id="Q92185">
    <property type="glycosylation" value="4 sites, No reported glycans"/>
</dbReference>
<dbReference type="GlyGen" id="Q92185">
    <property type="glycosylation" value="4 sites"/>
</dbReference>
<dbReference type="iPTMnet" id="Q92185"/>
<dbReference type="PhosphoSitePlus" id="Q92185"/>
<dbReference type="SwissPalm" id="Q92185"/>
<dbReference type="BioMuta" id="ST8SIA1"/>
<dbReference type="MassIVE" id="Q92185"/>
<dbReference type="PaxDb" id="9606-ENSP00000379353"/>
<dbReference type="PeptideAtlas" id="Q92185"/>
<dbReference type="ProteomicsDB" id="75252">
    <molecule id="Q92185-1"/>
</dbReference>
<dbReference type="Antibodypedia" id="12441">
    <property type="antibodies" value="74 antibodies from 21 providers"/>
</dbReference>
<dbReference type="DNASU" id="6489"/>
<dbReference type="Ensembl" id="ENST00000261197.7">
    <molecule id="Q92185-2"/>
    <property type="protein sequence ID" value="ENSP00000261197.3"/>
    <property type="gene ID" value="ENSG00000111728.11"/>
</dbReference>
<dbReference type="Ensembl" id="ENST00000396037.9">
    <molecule id="Q92185-1"/>
    <property type="protein sequence ID" value="ENSP00000379353.3"/>
    <property type="gene ID" value="ENSG00000111728.11"/>
</dbReference>
<dbReference type="GeneID" id="6489"/>
<dbReference type="KEGG" id="hsa:6489"/>
<dbReference type="MANE-Select" id="ENST00000396037.9">
    <property type="protein sequence ID" value="ENSP00000379353.3"/>
    <property type="RefSeq nucleotide sequence ID" value="NM_003034.4"/>
    <property type="RefSeq protein sequence ID" value="NP_003025.1"/>
</dbReference>
<dbReference type="UCSC" id="uc001rfo.4">
    <molecule id="Q92185-1"/>
    <property type="organism name" value="human"/>
</dbReference>
<dbReference type="AGR" id="HGNC:10869"/>
<dbReference type="CTD" id="6489"/>
<dbReference type="DisGeNET" id="6489"/>
<dbReference type="GeneCards" id="ST8SIA1"/>
<dbReference type="HGNC" id="HGNC:10869">
    <property type="gene designation" value="ST8SIA1"/>
</dbReference>
<dbReference type="HPA" id="ENSG00000111728">
    <property type="expression patterns" value="Low tissue specificity"/>
</dbReference>
<dbReference type="MIM" id="601123">
    <property type="type" value="gene"/>
</dbReference>
<dbReference type="neXtProt" id="NX_Q92185"/>
<dbReference type="OpenTargets" id="ENSG00000111728"/>
<dbReference type="PharmGKB" id="PA35770"/>
<dbReference type="VEuPathDB" id="HostDB:ENSG00000111728"/>
<dbReference type="eggNOG" id="KOG2692">
    <property type="taxonomic scope" value="Eukaryota"/>
</dbReference>
<dbReference type="GeneTree" id="ENSGT01030000234535"/>
<dbReference type="HOGENOM" id="CLU_048583_1_0_1"/>
<dbReference type="InParanoid" id="Q92185"/>
<dbReference type="OMA" id="MAGLAWK"/>
<dbReference type="OrthoDB" id="10264956at2759"/>
<dbReference type="PAN-GO" id="Q92185">
    <property type="GO annotations" value="4 GO annotations based on evolutionary models"/>
</dbReference>
<dbReference type="PhylomeDB" id="Q92185"/>
<dbReference type="TreeFam" id="TF323961"/>
<dbReference type="BioCyc" id="MetaCyc:HS03456-MONOMER"/>
<dbReference type="BRENDA" id="2.4.99.8">
    <property type="organism ID" value="2681"/>
</dbReference>
<dbReference type="PathwayCommons" id="Q92185"/>
<dbReference type="Reactome" id="R-HSA-4085001">
    <property type="pathway name" value="Sialic acid metabolism"/>
</dbReference>
<dbReference type="SABIO-RK" id="Q92185"/>
<dbReference type="SignaLink" id="Q92185"/>
<dbReference type="UniPathway" id="UPA00222"/>
<dbReference type="UniPathway" id="UPA00378"/>
<dbReference type="BioGRID-ORCS" id="6489">
    <property type="hits" value="10 hits in 1132 CRISPR screens"/>
</dbReference>
<dbReference type="ChiTaRS" id="ST8SIA1">
    <property type="organism name" value="human"/>
</dbReference>
<dbReference type="GeneWiki" id="ST8SIA1"/>
<dbReference type="GenomeRNAi" id="6489"/>
<dbReference type="Pharos" id="Q92185">
    <property type="development level" value="Tbio"/>
</dbReference>
<dbReference type="PRO" id="PR:Q92185"/>
<dbReference type="Proteomes" id="UP000005640">
    <property type="component" value="Chromosome 12"/>
</dbReference>
<dbReference type="RNAct" id="Q92185">
    <property type="molecule type" value="protein"/>
</dbReference>
<dbReference type="Bgee" id="ENSG00000111728">
    <property type="expression patterns" value="Expressed in ventricular zone and 146 other cell types or tissues"/>
</dbReference>
<dbReference type="ExpressionAtlas" id="Q92185">
    <property type="expression patterns" value="baseline and differential"/>
</dbReference>
<dbReference type="GO" id="GO:0000139">
    <property type="term" value="C:Golgi membrane"/>
    <property type="evidence" value="ECO:0000304"/>
    <property type="project" value="Reactome"/>
</dbReference>
<dbReference type="GO" id="GO:0016020">
    <property type="term" value="C:membrane"/>
    <property type="evidence" value="ECO:0000304"/>
    <property type="project" value="ProtInc"/>
</dbReference>
<dbReference type="GO" id="GO:0003828">
    <property type="term" value="F:alpha-N-acetylneuraminate alpha-2,8-sialyltransferase activity"/>
    <property type="evidence" value="ECO:0000314"/>
    <property type="project" value="UniProtKB"/>
</dbReference>
<dbReference type="GO" id="GO:0008373">
    <property type="term" value="F:sialyltransferase activity"/>
    <property type="evidence" value="ECO:0000304"/>
    <property type="project" value="ProtInc"/>
</dbReference>
<dbReference type="GO" id="GO:0005975">
    <property type="term" value="P:carbohydrate metabolic process"/>
    <property type="evidence" value="ECO:0000304"/>
    <property type="project" value="ProtInc"/>
</dbReference>
<dbReference type="GO" id="GO:0034605">
    <property type="term" value="P:cellular response to heat"/>
    <property type="evidence" value="ECO:0007669"/>
    <property type="project" value="Ensembl"/>
</dbReference>
<dbReference type="GO" id="GO:0050673">
    <property type="term" value="P:epithelial cell proliferation"/>
    <property type="evidence" value="ECO:0007669"/>
    <property type="project" value="Ensembl"/>
</dbReference>
<dbReference type="GO" id="GO:0006688">
    <property type="term" value="P:glycosphingolipid biosynthetic process"/>
    <property type="evidence" value="ECO:0000304"/>
    <property type="project" value="ProtInc"/>
</dbReference>
<dbReference type="GO" id="GO:0006491">
    <property type="term" value="P:N-glycan processing"/>
    <property type="evidence" value="ECO:0000318"/>
    <property type="project" value="GO_Central"/>
</dbReference>
<dbReference type="GO" id="GO:0009311">
    <property type="term" value="P:oligosaccharide metabolic process"/>
    <property type="evidence" value="ECO:0000318"/>
    <property type="project" value="GO_Central"/>
</dbReference>
<dbReference type="GO" id="GO:0050679">
    <property type="term" value="P:positive regulation of epithelial cell proliferation"/>
    <property type="evidence" value="ECO:0007669"/>
    <property type="project" value="Ensembl"/>
</dbReference>
<dbReference type="GO" id="GO:0006486">
    <property type="term" value="P:protein glycosylation"/>
    <property type="evidence" value="ECO:0000318"/>
    <property type="project" value="GO_Central"/>
</dbReference>
<dbReference type="CDD" id="cd23989">
    <property type="entry name" value="GT29_ST8SIA1"/>
    <property type="match status" value="1"/>
</dbReference>
<dbReference type="FunFam" id="3.90.1480.20:FF:000014">
    <property type="entry name" value="Alpha-N-acetylneuraminide alpha-2,8-sialyltransferase"/>
    <property type="match status" value="1"/>
</dbReference>
<dbReference type="Gene3D" id="3.90.1480.20">
    <property type="entry name" value="Glycosyl transferase family 29"/>
    <property type="match status" value="1"/>
</dbReference>
<dbReference type="InterPro" id="IPR001675">
    <property type="entry name" value="Glyco_trans_29"/>
</dbReference>
<dbReference type="InterPro" id="IPR050943">
    <property type="entry name" value="Glycosyltr_29_Sialyltrsf"/>
</dbReference>
<dbReference type="InterPro" id="IPR038578">
    <property type="entry name" value="GT29-like_sf"/>
</dbReference>
<dbReference type="InterPro" id="IPR012163">
    <property type="entry name" value="Sialyl_trans"/>
</dbReference>
<dbReference type="PANTHER" id="PTHR11987">
    <property type="entry name" value="ALPHA-2,8-SIALYLTRANSFERASE"/>
    <property type="match status" value="1"/>
</dbReference>
<dbReference type="PANTHER" id="PTHR11987:SF3">
    <property type="entry name" value="ALPHA-N-ACETYLNEURAMINIDE ALPHA-2,8-SIALYLTRANSFERASE"/>
    <property type="match status" value="1"/>
</dbReference>
<dbReference type="Pfam" id="PF00777">
    <property type="entry name" value="Glyco_transf_29"/>
    <property type="match status" value="1"/>
</dbReference>
<dbReference type="PIRSF" id="PIRSF005557">
    <property type="entry name" value="Sialyl_trans"/>
    <property type="match status" value="1"/>
</dbReference>
<feature type="chain" id="PRO_0000149282" description="Alpha-N-acetylneuraminide alpha-2,8-sialyltransferase">
    <location>
        <begin position="1"/>
        <end position="356"/>
    </location>
</feature>
<feature type="topological domain" description="Cytoplasmic" evidence="2">
    <location>
        <begin position="1"/>
        <end position="29"/>
    </location>
</feature>
<feature type="transmembrane region" description="Helical; Signal-anchor for type II membrane protein" evidence="2">
    <location>
        <begin position="30"/>
        <end position="48"/>
    </location>
</feature>
<feature type="topological domain" description="Lumenal" evidence="2">
    <location>
        <begin position="49"/>
        <end position="356"/>
    </location>
</feature>
<feature type="active site" description="Proton donor/acceptor" evidence="1">
    <location>
        <position position="322"/>
    </location>
</feature>
<feature type="binding site" evidence="1">
    <location>
        <position position="143"/>
    </location>
    <ligand>
        <name>CMP-N-acetyl-beta-neuraminate</name>
        <dbReference type="ChEBI" id="CHEBI:57812"/>
    </ligand>
</feature>
<feature type="binding site" evidence="1">
    <location>
        <position position="166"/>
    </location>
    <ligand>
        <name>CMP-N-acetyl-beta-neuraminate</name>
        <dbReference type="ChEBI" id="CHEBI:57812"/>
    </ligand>
</feature>
<feature type="binding site" evidence="1">
    <location>
        <position position="274"/>
    </location>
    <ligand>
        <name>CMP-N-acetyl-beta-neuraminate</name>
        <dbReference type="ChEBI" id="CHEBI:57812"/>
    </ligand>
</feature>
<feature type="binding site" evidence="1">
    <location>
        <position position="275"/>
    </location>
    <ligand>
        <name>CMP-N-acetyl-beta-neuraminate</name>
        <dbReference type="ChEBI" id="CHEBI:57812"/>
    </ligand>
</feature>
<feature type="binding site" evidence="1">
    <location>
        <position position="276"/>
    </location>
    <ligand>
        <name>CMP-N-acetyl-beta-neuraminate</name>
        <dbReference type="ChEBI" id="CHEBI:57812"/>
    </ligand>
</feature>
<feature type="binding site" evidence="1">
    <location>
        <position position="296"/>
    </location>
    <ligand>
        <name>CMP-N-acetyl-beta-neuraminate</name>
        <dbReference type="ChEBI" id="CHEBI:57812"/>
    </ligand>
</feature>
<feature type="binding site" evidence="1">
    <location>
        <position position="310"/>
    </location>
    <ligand>
        <name>CMP-N-acetyl-beta-neuraminate</name>
        <dbReference type="ChEBI" id="CHEBI:57812"/>
    </ligand>
</feature>
<feature type="glycosylation site" description="N-linked (GlcNAc...) asparagine" evidence="2">
    <location>
        <position position="71"/>
    </location>
</feature>
<feature type="glycosylation site" description="N-linked (GlcNAc...) asparagine" evidence="2">
    <location>
        <position position="119"/>
    </location>
</feature>
<feature type="glycosylation site" description="N-linked (GlcNAc...) asparagine" evidence="2">
    <location>
        <position position="214"/>
    </location>
</feature>
<feature type="glycosylation site" description="N-linked (GlcNAc...) asparagine" evidence="2">
    <location>
        <position position="245"/>
    </location>
</feature>
<feature type="disulfide bond" evidence="1">
    <location>
        <begin position="138"/>
        <end position="287"/>
    </location>
</feature>
<feature type="disulfide bond" evidence="1">
    <location>
        <begin position="152"/>
        <end position="347"/>
    </location>
</feature>
<feature type="splice variant" id="VSP_047583" description="In isoform 2." evidence="10 11">
    <original>ATPFQLPL</original>
    <variation>MQSPSFVK</variation>
    <location>
        <begin position="128"/>
        <end position="135"/>
    </location>
</feature>
<feature type="splice variant" id="VSP_047584" description="In isoform 2." evidence="10 11">
    <location>
        <begin position="136"/>
        <end position="356"/>
    </location>
</feature>
<feature type="mutagenesis site" description="Enzyme activity is 42% of the wild-type. A 2.5-fold increase in Km value for CMP-N-acetyl-beta-neuraminate. A 2.3-fold decrease in Vmax for both CMP-N-acetyl-beta-neuraminate and ganglioside GM3." evidence="3">
    <original>N</original>
    <variation>D</variation>
    <location>
        <position position="188"/>
    </location>
</feature>
<feature type="mutagenesis site" description="Enzyme activity is 91% of the wild-type." evidence="3">
    <original>P</original>
    <variation>A</variation>
    <location>
        <position position="189"/>
    </location>
</feature>
<feature type="mutagenesis site" description="Enzyme activity is 33% of the wild-type. A 2-fold increase in Km value for ganglioside GM3 and 1.25 fold increase in Km value for CMP-N-acetyl-beta-neuraminate. A 3-fold decrease in Vmax for both CMP-N-acetyl-beta-neuraminate and ganglioside GM3.">
    <original>S</original>
    <variation>A</variation>
    <location>
        <position position="190"/>
    </location>
</feature>
<feature type="mutagenesis site" description="Enzyme activity is 20% of the wild-type. A 10-fold increase in Km value for ganglioside GM3. A 5-fold decrease in Vmax for both CMP-N-acetyl-beta-neuraminate and ganglioside GM3." evidence="3">
    <original>R</original>
    <variation>A</variation>
    <location>
        <position position="272"/>
    </location>
</feature>
<feature type="mutagenesis site" description="Enzyme activity is 19% of the wild-type." evidence="3">
    <original>R</original>
    <variation>I</variation>
    <location>
        <position position="272"/>
    </location>
</feature>
<feature type="mutagenesis site" description="Enzyme activity is 98% of the wild-type." evidence="3">
    <original>R</original>
    <variation>K</variation>
    <location>
        <position position="272"/>
    </location>
</feature>
<proteinExistence type="evidence at protein level"/>
<protein>
    <recommendedName>
        <fullName evidence="12">Alpha-N-acetylneuraminide alpha-2,8-sialyltransferase</fullName>
        <ecNumber evidence="3 4 5 6 7 8 9">2.4.3.8</ecNumber>
    </recommendedName>
    <alternativeName>
        <fullName>Alpha-2,8-sialyltransferase 8A</fullName>
    </alternativeName>
    <alternativeName>
        <fullName>Ganglioside GD3 synthase</fullName>
    </alternativeName>
    <alternativeName>
        <fullName>Ganglioside GT3 synthase</fullName>
    </alternativeName>
    <alternativeName>
        <fullName>Sialyltransferase 8A</fullName>
        <shortName>SIAT8-A</shortName>
    </alternativeName>
    <alternativeName>
        <fullName>Sialyltransferase St8Sia I</fullName>
        <shortName>ST8SiaI</shortName>
    </alternativeName>
</protein>
<name>SIA8A_HUMAN</name>
<evidence type="ECO:0000250" key="1">
    <source>
        <dbReference type="UniProtKB" id="O43173"/>
    </source>
</evidence>
<evidence type="ECO:0000255" key="2"/>
<evidence type="ECO:0000269" key="3">
    <source>
    </source>
</evidence>
<evidence type="ECO:0000269" key="4">
    <source>
    </source>
</evidence>
<evidence type="ECO:0000269" key="5">
    <source>
    </source>
</evidence>
<evidence type="ECO:0000269" key="6">
    <source>
    </source>
</evidence>
<evidence type="ECO:0000269" key="7">
    <source>
    </source>
</evidence>
<evidence type="ECO:0000269" key="8">
    <source>
    </source>
</evidence>
<evidence type="ECO:0000269" key="9">
    <source>
    </source>
</evidence>
<evidence type="ECO:0000303" key="10">
    <source ref="5"/>
</evidence>
<evidence type="ECO:0000303" key="11">
    <source ref="6"/>
</evidence>
<evidence type="ECO:0000305" key="12"/>
<evidence type="ECO:0000305" key="13">
    <source>
    </source>
</evidence>
<evidence type="ECO:0000305" key="14">
    <source>
    </source>
</evidence>
<evidence type="ECO:0000305" key="15">
    <source>
    </source>
</evidence>
<evidence type="ECO:0000312" key="16">
    <source>
        <dbReference type="HGNC" id="HGNC:10869"/>
    </source>
</evidence>
<sequence>MSPCGRARRQTSRGAMAVLAWKFPRTRLPMGASALCVVVLCWLYIFPVYRLPNEKEIVQGVLQQGTAWRRNQTAARAFRKQMEDCCDPAHLFAMTKMNSPMGKSMWYDGEFLYSFTIDNSTYSLFPQATPFQLPLKKCAVVGNGGILKKSGCGRQIDEANFVMRCNLPPLSSEYTKDVGSKSQLVTANPSIIRQRFQNLLWSRKTFVDNMKIYNHSYIYMPAFSMKTGTEPSLRVYYTLSDVGANQTVLFANPNFLRSIGKFWKSRGIHAKRLSTGLFLVSAALGLCEEVAIYGFWPFSVNMHEQPISHHYYDNVLPFSGFHAMPEEFLQLWYLHKIGALRMQLDPCEDTSLQPTS</sequence>
<reference key="1">
    <citation type="journal article" date="1994" name="J. Biol. Chem.">
        <title>Expression cloning of a GM3-specific alpha-2,8-sialyltransferase (GD3 synthase).</title>
        <authorList>
            <person name="Sasaki K."/>
            <person name="Kurata K."/>
            <person name="Kojima N."/>
            <person name="Kurosawa N."/>
            <person name="Ohta S."/>
            <person name="Hanai N."/>
            <person name="Tsuji S."/>
            <person name="Nishi T."/>
        </authorList>
    </citation>
    <scope>NUCLEOTIDE SEQUENCE [MRNA] (ISOFORM 1)</scope>
    <scope>FUNCTION</scope>
    <scope>CATALYTIC ACTIVITY</scope>
    <source>
        <tissue>Melanoma</tissue>
    </source>
</reference>
<reference key="2">
    <citation type="journal article" date="1994" name="Proc. Natl. Acad. Sci. U.S.A.">
        <title>Expression cloning of a CMP-NeuAc:NeuAc alpha 2-3Gal beta 1-4Glc beta 1-1'Cer alpha 2,8-sialyltransferase (GD3 synthase) from human melanoma cells.</title>
        <authorList>
            <person name="Nara K."/>
            <person name="Watanabe Y."/>
            <person name="Maruyama K."/>
            <person name="Kasahara K."/>
            <person name="Nagai Y."/>
            <person name="Sanai Y."/>
        </authorList>
    </citation>
    <scope>NUCLEOTIDE SEQUENCE [MRNA] (ISOFORM 1)</scope>
    <scope>FUNCTION</scope>
    <scope>CATALYTIC ACTIVITY</scope>
    <source>
        <tissue>Melanoma</tissue>
    </source>
</reference>
<reference key="3">
    <citation type="journal article" date="1994" name="Proc. Natl. Acad. Sci. U.S.A.">
        <title>Isolation of GD3 synthase gene by expression cloning of GM3 alpha-2,8-sialyltransferase cDNA using anti-GD2 monoclonal antibody.</title>
        <authorList>
            <person name="Haraguchi M."/>
            <person name="Yamashiro S."/>
            <person name="Yamamoto A."/>
            <person name="Furukawa K."/>
            <person name="Takamiya K."/>
            <person name="Lloyd K.O."/>
            <person name="Shiku H."/>
            <person name="Furukawa K."/>
        </authorList>
    </citation>
    <scope>NUCLEOTIDE SEQUENCE [MRNA] (ISOFORM 1)</scope>
    <scope>FUNCTION</scope>
    <scope>CATALYTIC ACTIVITY</scope>
    <scope>TISSUE SPECIFICITY</scope>
</reference>
<reference key="4">
    <citation type="journal article" date="1996" name="J. Biol. Chem.">
        <title>Expression cloning of a human GT3 synthase. GD3 and GT3 are synthesized by a single enzyme.</title>
        <authorList>
            <person name="Nakayama J."/>
            <person name="Fukuda M.N."/>
            <person name="Hirabayashi Y."/>
            <person name="Kanamori A."/>
            <person name="Sasaki K."/>
            <person name="Nishi T."/>
            <person name="Fukuda M."/>
        </authorList>
    </citation>
    <scope>NUCLEOTIDE SEQUENCE [MRNA] (ISOFORM 1)</scope>
    <scope>FUNCTION</scope>
    <scope>CATALYTIC ACTIVITY</scope>
    <scope>TISSUE SPECIFICITY</scope>
</reference>
<reference key="5">
    <citation type="submission" date="2004-03" db="EMBL/GenBank/DDBJ databases">
        <title>Cloning of alternative human SAT-2 mRNA.</title>
        <authorList>
            <person name="Rimoldi S."/>
            <person name="Papis E."/>
            <person name="Bernardini G."/>
            <person name="Gornati R."/>
        </authorList>
    </citation>
    <scope>NUCLEOTIDE SEQUENCE [MRNA] (ISOFORM 2)</scope>
    <scope>ALTERNATIVE SPLICING</scope>
</reference>
<reference key="6">
    <citation type="submission" date="2007-07" db="EMBL/GenBank/DDBJ databases">
        <title>Alternative splice variant of the ST8SIA1 gene.</title>
        <authorList>
            <person name="Konta L."/>
            <person name="Laws S.M."/>
            <person name="Riemenschneider M."/>
            <person name="Adamski J."/>
        </authorList>
    </citation>
    <scope>NUCLEOTIDE SEQUENCE [MRNA] (ISOFORM 2)</scope>
    <scope>ALTERNATIVE SPLICING</scope>
</reference>
<reference key="7">
    <citation type="journal article" date="2004" name="Nat. Genet.">
        <title>Complete sequencing and characterization of 21,243 full-length human cDNAs.</title>
        <authorList>
            <person name="Ota T."/>
            <person name="Suzuki Y."/>
            <person name="Nishikawa T."/>
            <person name="Otsuki T."/>
            <person name="Sugiyama T."/>
            <person name="Irie R."/>
            <person name="Wakamatsu A."/>
            <person name="Hayashi K."/>
            <person name="Sato H."/>
            <person name="Nagai K."/>
            <person name="Kimura K."/>
            <person name="Makita H."/>
            <person name="Sekine M."/>
            <person name="Obayashi M."/>
            <person name="Nishi T."/>
            <person name="Shibahara T."/>
            <person name="Tanaka T."/>
            <person name="Ishii S."/>
            <person name="Yamamoto J."/>
            <person name="Saito K."/>
            <person name="Kawai Y."/>
            <person name="Isono Y."/>
            <person name="Nakamura Y."/>
            <person name="Nagahari K."/>
            <person name="Murakami K."/>
            <person name="Yasuda T."/>
            <person name="Iwayanagi T."/>
            <person name="Wagatsuma M."/>
            <person name="Shiratori A."/>
            <person name="Sudo H."/>
            <person name="Hosoiri T."/>
            <person name="Kaku Y."/>
            <person name="Kodaira H."/>
            <person name="Kondo H."/>
            <person name="Sugawara M."/>
            <person name="Takahashi M."/>
            <person name="Kanda K."/>
            <person name="Yokoi T."/>
            <person name="Furuya T."/>
            <person name="Kikkawa E."/>
            <person name="Omura Y."/>
            <person name="Abe K."/>
            <person name="Kamihara K."/>
            <person name="Katsuta N."/>
            <person name="Sato K."/>
            <person name="Tanikawa M."/>
            <person name="Yamazaki M."/>
            <person name="Ninomiya K."/>
            <person name="Ishibashi T."/>
            <person name="Yamashita H."/>
            <person name="Murakawa K."/>
            <person name="Fujimori K."/>
            <person name="Tanai H."/>
            <person name="Kimata M."/>
            <person name="Watanabe M."/>
            <person name="Hiraoka S."/>
            <person name="Chiba Y."/>
            <person name="Ishida S."/>
            <person name="Ono Y."/>
            <person name="Takiguchi S."/>
            <person name="Watanabe S."/>
            <person name="Yosida M."/>
            <person name="Hotuta T."/>
            <person name="Kusano J."/>
            <person name="Kanehori K."/>
            <person name="Takahashi-Fujii A."/>
            <person name="Hara H."/>
            <person name="Tanase T.-O."/>
            <person name="Nomura Y."/>
            <person name="Togiya S."/>
            <person name="Komai F."/>
            <person name="Hara R."/>
            <person name="Takeuchi K."/>
            <person name="Arita M."/>
            <person name="Imose N."/>
            <person name="Musashino K."/>
            <person name="Yuuki H."/>
            <person name="Oshima A."/>
            <person name="Sasaki N."/>
            <person name="Aotsuka S."/>
            <person name="Yoshikawa Y."/>
            <person name="Matsunawa H."/>
            <person name="Ichihara T."/>
            <person name="Shiohata N."/>
            <person name="Sano S."/>
            <person name="Moriya S."/>
            <person name="Momiyama H."/>
            <person name="Satoh N."/>
            <person name="Takami S."/>
            <person name="Terashima Y."/>
            <person name="Suzuki O."/>
            <person name="Nakagawa S."/>
            <person name="Senoh A."/>
            <person name="Mizoguchi H."/>
            <person name="Goto Y."/>
            <person name="Shimizu F."/>
            <person name="Wakebe H."/>
            <person name="Hishigaki H."/>
            <person name="Watanabe T."/>
            <person name="Sugiyama A."/>
            <person name="Takemoto M."/>
            <person name="Kawakami B."/>
            <person name="Yamazaki M."/>
            <person name="Watanabe K."/>
            <person name="Kumagai A."/>
            <person name="Itakura S."/>
            <person name="Fukuzumi Y."/>
            <person name="Fujimori Y."/>
            <person name="Komiyama M."/>
            <person name="Tashiro H."/>
            <person name="Tanigami A."/>
            <person name="Fujiwara T."/>
            <person name="Ono T."/>
            <person name="Yamada K."/>
            <person name="Fujii Y."/>
            <person name="Ozaki K."/>
            <person name="Hirao M."/>
            <person name="Ohmori Y."/>
            <person name="Kawabata A."/>
            <person name="Hikiji T."/>
            <person name="Kobatake N."/>
            <person name="Inagaki H."/>
            <person name="Ikema Y."/>
            <person name="Okamoto S."/>
            <person name="Okitani R."/>
            <person name="Kawakami T."/>
            <person name="Noguchi S."/>
            <person name="Itoh T."/>
            <person name="Shigeta K."/>
            <person name="Senba T."/>
            <person name="Matsumura K."/>
            <person name="Nakajima Y."/>
            <person name="Mizuno T."/>
            <person name="Morinaga M."/>
            <person name="Sasaki M."/>
            <person name="Togashi T."/>
            <person name="Oyama M."/>
            <person name="Hata H."/>
            <person name="Watanabe M."/>
            <person name="Komatsu T."/>
            <person name="Mizushima-Sugano J."/>
            <person name="Satoh T."/>
            <person name="Shirai Y."/>
            <person name="Takahashi Y."/>
            <person name="Nakagawa K."/>
            <person name="Okumura K."/>
            <person name="Nagase T."/>
            <person name="Nomura N."/>
            <person name="Kikuchi H."/>
            <person name="Masuho Y."/>
            <person name="Yamashita R."/>
            <person name="Nakai K."/>
            <person name="Yada T."/>
            <person name="Nakamura Y."/>
            <person name="Ohara O."/>
            <person name="Isogai T."/>
            <person name="Sugano S."/>
        </authorList>
    </citation>
    <scope>NUCLEOTIDE SEQUENCE [LARGE SCALE MRNA] (ISOFORM 1)</scope>
    <source>
        <tissue>Stomach</tissue>
        <tissue>Teratocarcinoma</tissue>
    </source>
</reference>
<reference key="8">
    <citation type="journal article" date="2006" name="Nature">
        <title>The finished DNA sequence of human chromosome 12.</title>
        <authorList>
            <person name="Scherer S.E."/>
            <person name="Muzny D.M."/>
            <person name="Buhay C.J."/>
            <person name="Chen R."/>
            <person name="Cree A."/>
            <person name="Ding Y."/>
            <person name="Dugan-Rocha S."/>
            <person name="Gill R."/>
            <person name="Gunaratne P."/>
            <person name="Harris R.A."/>
            <person name="Hawes A.C."/>
            <person name="Hernandez J."/>
            <person name="Hodgson A.V."/>
            <person name="Hume J."/>
            <person name="Jackson A."/>
            <person name="Khan Z.M."/>
            <person name="Kovar-Smith C."/>
            <person name="Lewis L.R."/>
            <person name="Lozado R.J."/>
            <person name="Metzker M.L."/>
            <person name="Milosavljevic A."/>
            <person name="Miner G.R."/>
            <person name="Montgomery K.T."/>
            <person name="Morgan M.B."/>
            <person name="Nazareth L.V."/>
            <person name="Scott G."/>
            <person name="Sodergren E."/>
            <person name="Song X.-Z."/>
            <person name="Steffen D."/>
            <person name="Lovering R.C."/>
            <person name="Wheeler D.A."/>
            <person name="Worley K.C."/>
            <person name="Yuan Y."/>
            <person name="Zhang Z."/>
            <person name="Adams C.Q."/>
            <person name="Ansari-Lari M.A."/>
            <person name="Ayele M."/>
            <person name="Brown M.J."/>
            <person name="Chen G."/>
            <person name="Chen Z."/>
            <person name="Clerc-Blankenburg K.P."/>
            <person name="Davis C."/>
            <person name="Delgado O."/>
            <person name="Dinh H.H."/>
            <person name="Draper H."/>
            <person name="Gonzalez-Garay M.L."/>
            <person name="Havlak P."/>
            <person name="Jackson L.R."/>
            <person name="Jacob L.S."/>
            <person name="Kelly S.H."/>
            <person name="Li L."/>
            <person name="Li Z."/>
            <person name="Liu J."/>
            <person name="Liu W."/>
            <person name="Lu J."/>
            <person name="Maheshwari M."/>
            <person name="Nguyen B.-V."/>
            <person name="Okwuonu G.O."/>
            <person name="Pasternak S."/>
            <person name="Perez L.M."/>
            <person name="Plopper F.J.H."/>
            <person name="Santibanez J."/>
            <person name="Shen H."/>
            <person name="Tabor P.E."/>
            <person name="Verduzco D."/>
            <person name="Waldron L."/>
            <person name="Wang Q."/>
            <person name="Williams G.A."/>
            <person name="Zhang J."/>
            <person name="Zhou J."/>
            <person name="Allen C.C."/>
            <person name="Amin A.G."/>
            <person name="Anyalebechi V."/>
            <person name="Bailey M."/>
            <person name="Barbaria J.A."/>
            <person name="Bimage K.E."/>
            <person name="Bryant N.P."/>
            <person name="Burch P.E."/>
            <person name="Burkett C.E."/>
            <person name="Burrell K.L."/>
            <person name="Calderon E."/>
            <person name="Cardenas V."/>
            <person name="Carter K."/>
            <person name="Casias K."/>
            <person name="Cavazos I."/>
            <person name="Cavazos S.R."/>
            <person name="Ceasar H."/>
            <person name="Chacko J."/>
            <person name="Chan S.N."/>
            <person name="Chavez D."/>
            <person name="Christopoulos C."/>
            <person name="Chu J."/>
            <person name="Cockrell R."/>
            <person name="Cox C.D."/>
            <person name="Dang M."/>
            <person name="Dathorne S.R."/>
            <person name="David R."/>
            <person name="Davis C.M."/>
            <person name="Davy-Carroll L."/>
            <person name="Deshazo D.R."/>
            <person name="Donlin J.E."/>
            <person name="D'Souza L."/>
            <person name="Eaves K.A."/>
            <person name="Egan A."/>
            <person name="Emery-Cohen A.J."/>
            <person name="Escotto M."/>
            <person name="Flagg N."/>
            <person name="Forbes L.D."/>
            <person name="Gabisi A.M."/>
            <person name="Garza M."/>
            <person name="Hamilton C."/>
            <person name="Henderson N."/>
            <person name="Hernandez O."/>
            <person name="Hines S."/>
            <person name="Hogues M.E."/>
            <person name="Huang M."/>
            <person name="Idlebird D.G."/>
            <person name="Johnson R."/>
            <person name="Jolivet A."/>
            <person name="Jones S."/>
            <person name="Kagan R."/>
            <person name="King L.M."/>
            <person name="Leal B."/>
            <person name="Lebow H."/>
            <person name="Lee S."/>
            <person name="LeVan J.M."/>
            <person name="Lewis L.C."/>
            <person name="London P."/>
            <person name="Lorensuhewa L.M."/>
            <person name="Loulseged H."/>
            <person name="Lovett D.A."/>
            <person name="Lucier A."/>
            <person name="Lucier R.L."/>
            <person name="Ma J."/>
            <person name="Madu R.C."/>
            <person name="Mapua P."/>
            <person name="Martindale A.D."/>
            <person name="Martinez E."/>
            <person name="Massey E."/>
            <person name="Mawhiney S."/>
            <person name="Meador M.G."/>
            <person name="Mendez S."/>
            <person name="Mercado C."/>
            <person name="Mercado I.C."/>
            <person name="Merritt C.E."/>
            <person name="Miner Z.L."/>
            <person name="Minja E."/>
            <person name="Mitchell T."/>
            <person name="Mohabbat F."/>
            <person name="Mohabbat K."/>
            <person name="Montgomery B."/>
            <person name="Moore N."/>
            <person name="Morris S."/>
            <person name="Munidasa M."/>
            <person name="Ngo R.N."/>
            <person name="Nguyen N.B."/>
            <person name="Nickerson E."/>
            <person name="Nwaokelemeh O.O."/>
            <person name="Nwokenkwo S."/>
            <person name="Obregon M."/>
            <person name="Oguh M."/>
            <person name="Oragunye N."/>
            <person name="Oviedo R.J."/>
            <person name="Parish B.J."/>
            <person name="Parker D.N."/>
            <person name="Parrish J."/>
            <person name="Parks K.L."/>
            <person name="Paul H.A."/>
            <person name="Payton B.A."/>
            <person name="Perez A."/>
            <person name="Perrin W."/>
            <person name="Pickens A."/>
            <person name="Primus E.L."/>
            <person name="Pu L.-L."/>
            <person name="Puazo M."/>
            <person name="Quiles M.M."/>
            <person name="Quiroz J.B."/>
            <person name="Rabata D."/>
            <person name="Reeves K."/>
            <person name="Ruiz S.J."/>
            <person name="Shao H."/>
            <person name="Sisson I."/>
            <person name="Sonaike T."/>
            <person name="Sorelle R.P."/>
            <person name="Sutton A.E."/>
            <person name="Svatek A.F."/>
            <person name="Svetz L.A."/>
            <person name="Tamerisa K.S."/>
            <person name="Taylor T.R."/>
            <person name="Teague B."/>
            <person name="Thomas N."/>
            <person name="Thorn R.D."/>
            <person name="Trejos Z.Y."/>
            <person name="Trevino B.K."/>
            <person name="Ukegbu O.N."/>
            <person name="Urban J.B."/>
            <person name="Vasquez L.I."/>
            <person name="Vera V.A."/>
            <person name="Villasana D.M."/>
            <person name="Wang L."/>
            <person name="Ward-Moore S."/>
            <person name="Warren J.T."/>
            <person name="Wei X."/>
            <person name="White F."/>
            <person name="Williamson A.L."/>
            <person name="Wleczyk R."/>
            <person name="Wooden H.S."/>
            <person name="Wooden S.H."/>
            <person name="Yen J."/>
            <person name="Yoon L."/>
            <person name="Yoon V."/>
            <person name="Zorrilla S.E."/>
            <person name="Nelson D."/>
            <person name="Kucherlapati R."/>
            <person name="Weinstock G."/>
            <person name="Gibbs R.A."/>
        </authorList>
    </citation>
    <scope>NUCLEOTIDE SEQUENCE [LARGE SCALE GENOMIC DNA]</scope>
</reference>
<reference key="9">
    <citation type="submission" date="2005-07" db="EMBL/GenBank/DDBJ databases">
        <authorList>
            <person name="Mural R.J."/>
            <person name="Istrail S."/>
            <person name="Sutton G.G."/>
            <person name="Florea L."/>
            <person name="Halpern A.L."/>
            <person name="Mobarry C.M."/>
            <person name="Lippert R."/>
            <person name="Walenz B."/>
            <person name="Shatkay H."/>
            <person name="Dew I."/>
            <person name="Miller J.R."/>
            <person name="Flanigan M.J."/>
            <person name="Edwards N.J."/>
            <person name="Bolanos R."/>
            <person name="Fasulo D."/>
            <person name="Halldorsson B.V."/>
            <person name="Hannenhalli S."/>
            <person name="Turner R."/>
            <person name="Yooseph S."/>
            <person name="Lu F."/>
            <person name="Nusskern D.R."/>
            <person name="Shue B.C."/>
            <person name="Zheng X.H."/>
            <person name="Zhong F."/>
            <person name="Delcher A.L."/>
            <person name="Huson D.H."/>
            <person name="Kravitz S.A."/>
            <person name="Mouchard L."/>
            <person name="Reinert K."/>
            <person name="Remington K.A."/>
            <person name="Clark A.G."/>
            <person name="Waterman M.S."/>
            <person name="Eichler E.E."/>
            <person name="Adams M.D."/>
            <person name="Hunkapiller M.W."/>
            <person name="Myers E.W."/>
            <person name="Venter J.C."/>
        </authorList>
    </citation>
    <scope>NUCLEOTIDE SEQUENCE [LARGE SCALE GENOMIC DNA]</scope>
</reference>
<reference key="10">
    <citation type="journal article" date="2004" name="Genome Res.">
        <title>The status, quality, and expansion of the NIH full-length cDNA project: the Mammalian Gene Collection (MGC).</title>
        <authorList>
            <consortium name="The MGC Project Team"/>
        </authorList>
    </citation>
    <scope>NUCLEOTIDE SEQUENCE [LARGE SCALE MRNA] (ISOFORM 1)</scope>
    <source>
        <tissue>Colon</tissue>
    </source>
</reference>
<reference key="11">
    <citation type="journal article" date="1996" name="Eur. J. Biochem.">
        <title>Acceptor substrate specificity of a cloned GD3 synthase that catalyzes the biosynthesis of both GD3 and GD1c/GT1a/GQ1b.</title>
        <authorList>
            <person name="Nara K."/>
            <person name="Watanabe Y."/>
            <person name="Kawashima I."/>
            <person name="Tai T."/>
            <person name="Nagai Y."/>
            <person name="Sanai Y."/>
        </authorList>
    </citation>
    <scope>FUNCTION</scope>
    <scope>CATALYTIC ACTIVITY</scope>
    <scope>BIOPHYSICOCHEMICAL PROPERTIES</scope>
</reference>
<reference key="12">
    <citation type="journal article" date="2005" name="Glycobiology">
        <title>The animal sialyltransferases and sialyltransferase-related genes: a phylogenetic approach.</title>
        <authorList>
            <person name="Harduin-Lepers A."/>
            <person name="Mollicone R."/>
            <person name="Delannoy P."/>
            <person name="Oriol R."/>
        </authorList>
    </citation>
    <scope>IDENTIFICATION</scope>
</reference>
<reference key="13">
    <citation type="journal article" date="2008" name="Biochem. Biophys. Res. Commun.">
        <title>Identification and analysis of novel functional sites in human GD3-synthase.</title>
        <authorList>
            <person name="Gu Y."/>
            <person name="Yu R.K."/>
        </authorList>
    </citation>
    <scope>FUNCTION</scope>
    <scope>CATALYTIC ACTIVITY</scope>
    <scope>BIOPHYSICOCHEMICAL PROPERTIES</scope>
    <scope>MUTAGENESIS OF ASN-188; PRO-189; SER-190 AND ARG-272</scope>
</reference>
<reference key="14">
    <citation type="journal article" date="2012" name="Molecules">
        <title>Accumulation of unusual gangliosides G(Q3) and G(P3) in breast cancer cells expressing the G(D3) synthase.</title>
        <authorList>
            <person name="Steenackers A."/>
            <person name="Vanbeselaere J."/>
            <person name="Cazet A."/>
            <person name="Bobowski M."/>
            <person name="Rombouts Y."/>
            <person name="Colomb F."/>
            <person name="Le Bourhis X."/>
            <person name="Guerardel Y."/>
            <person name="Delannoy P."/>
        </authorList>
    </citation>
    <scope>FUNCTION</scope>
    <scope>CATALYTIC ACTIVITY</scope>
</reference>
<comment type="function">
    <text evidence="3 4 5 6 7 8 9">Catalyzes the addition of sialic acid in alpha 2,8-linkage to the sialic acid moiety of the ganglioside GM3 to form ganglioside GD3; gangliosides are a subfamily of complex glycosphingolipds that contain one or more residues of sialic acid (PubMed:18348864, PubMed:22885356, PubMed:7937974, PubMed:8058740, PubMed:8195250, PubMed:8631981, PubMed:8706663). Can catalyze the addition of a second alpha-2,8-sialic acid to GD3 to form GT3 (PubMed:8631981). Can use GM1b, GD1a and GT1b as acceptor substrates to synthesize GD1c, GT1a and GQ1b respectively (PubMed:8706663). Can synthesize unusual tetra- and pentasialylated lactosylceramide derivatives identified as GQ3 (II3Neu5Ac4-Gg2Cer) and GP3 (II3Neu5Ac5-Gg2Cer) in breast cancer cells (PubMed:22885356).</text>
</comment>
<comment type="catalytic activity">
    <reaction evidence="3 4 5 6 7 8 9">
        <text>an N-acetyl-alpha-neuraminyl-(2-&gt;3)-beta-D-galactosyl derivative + CMP-N-acetyl-beta-neuraminate = an N-acetyl-alpha-neuraminyl-(2-&gt;8)-N-acetyl-alpha-neuraminyl-(2-&gt;3)-beta-D-galactosyl derivative + CMP + H(+)</text>
        <dbReference type="Rhea" id="RHEA:19313"/>
        <dbReference type="ChEBI" id="CHEBI:15378"/>
        <dbReference type="ChEBI" id="CHEBI:57812"/>
        <dbReference type="ChEBI" id="CHEBI:60377"/>
        <dbReference type="ChEBI" id="CHEBI:140308"/>
        <dbReference type="ChEBI" id="CHEBI:140309"/>
        <dbReference type="EC" id="2.4.3.8"/>
    </reaction>
</comment>
<comment type="catalytic activity">
    <reaction evidence="3 4 5 6 7 8 9">
        <text>a ganglioside GM3 (d18:1(4E)) + CMP-N-acetyl-beta-neuraminate = a ganglioside GD3 (d18:1(4E)) + CMP + H(+)</text>
        <dbReference type="Rhea" id="RHEA:41760"/>
        <dbReference type="ChEBI" id="CHEBI:15378"/>
        <dbReference type="ChEBI" id="CHEBI:57812"/>
        <dbReference type="ChEBI" id="CHEBI:60065"/>
        <dbReference type="ChEBI" id="CHEBI:60377"/>
        <dbReference type="ChEBI" id="CHEBI:78436"/>
    </reaction>
    <physiologicalReaction direction="left-to-right" evidence="13">
        <dbReference type="Rhea" id="RHEA:41761"/>
    </physiologicalReaction>
</comment>
<comment type="catalytic activity">
    <reaction evidence="4 8">
        <text>a ganglioside GD3 (d18:1(4E)) + CMP-N-acetyl-beta-neuraminate = a ganglioside GT3 (d18:1(4E)) + CMP + H(+)</text>
        <dbReference type="Rhea" id="RHEA:41764"/>
        <dbReference type="ChEBI" id="CHEBI:15378"/>
        <dbReference type="ChEBI" id="CHEBI:57812"/>
        <dbReference type="ChEBI" id="CHEBI:60377"/>
        <dbReference type="ChEBI" id="CHEBI:78436"/>
        <dbReference type="ChEBI" id="CHEBI:78438"/>
    </reaction>
    <physiologicalReaction direction="left-to-right" evidence="14">
        <dbReference type="Rhea" id="RHEA:41765"/>
    </physiologicalReaction>
</comment>
<comment type="catalytic activity">
    <reaction evidence="9">
        <text>a ganglioside GD1a (d18:1(4E)) + CMP-N-acetyl-beta-neuraminate = a ganglioside GT1a (d18:1(4E)) + CMP + H(+)</text>
        <dbReference type="Rhea" id="RHEA:41768"/>
        <dbReference type="ChEBI" id="CHEBI:15378"/>
        <dbReference type="ChEBI" id="CHEBI:57812"/>
        <dbReference type="ChEBI" id="CHEBI:60377"/>
        <dbReference type="ChEBI" id="CHEBI:78445"/>
        <dbReference type="ChEBI" id="CHEBI:78447"/>
    </reaction>
    <physiologicalReaction direction="left-to-right" evidence="15">
        <dbReference type="Rhea" id="RHEA:41769"/>
    </physiologicalReaction>
</comment>
<comment type="catalytic activity">
    <reaction evidence="9">
        <text>a ganglioside GT1b (d18:1(4E)) + CMP-N-acetyl-beta-neuraminate = a ganglioside GQ1b (d18:1(4E)) + CMP + H(+)</text>
        <dbReference type="Rhea" id="RHEA:41772"/>
        <dbReference type="ChEBI" id="CHEBI:15378"/>
        <dbReference type="ChEBI" id="CHEBI:57812"/>
        <dbReference type="ChEBI" id="CHEBI:60377"/>
        <dbReference type="ChEBI" id="CHEBI:78452"/>
        <dbReference type="ChEBI" id="CHEBI:78455"/>
    </reaction>
    <physiologicalReaction direction="left-to-right" evidence="15">
        <dbReference type="Rhea" id="RHEA:41773"/>
    </physiologicalReaction>
</comment>
<comment type="catalytic activity">
    <reaction evidence="9">
        <text>a ganglioside GM1b (d18:1(4E)) + CMP-N-acetyl-beta-neuraminate = a ganglioside GD1c (d18:1(4E)) + CMP + H(+)</text>
        <dbReference type="Rhea" id="RHEA:47576"/>
        <dbReference type="ChEBI" id="CHEBI:15378"/>
        <dbReference type="ChEBI" id="CHEBI:57812"/>
        <dbReference type="ChEBI" id="CHEBI:60377"/>
        <dbReference type="ChEBI" id="CHEBI:78568"/>
        <dbReference type="ChEBI" id="CHEBI:87787"/>
    </reaction>
    <physiologicalReaction direction="left-to-right" evidence="15">
        <dbReference type="Rhea" id="RHEA:47577"/>
    </physiologicalReaction>
</comment>
<comment type="catalytic activity">
    <reaction evidence="8">
        <text>a ganglioside GD3 + CMP-N-acetyl-beta-neuraminate = a ganglioside GT3 + CMP + H(+)</text>
        <dbReference type="Rhea" id="RHEA:77295"/>
        <dbReference type="ChEBI" id="CHEBI:15378"/>
        <dbReference type="ChEBI" id="CHEBI:57812"/>
        <dbReference type="ChEBI" id="CHEBI:60377"/>
        <dbReference type="ChEBI" id="CHEBI:79214"/>
        <dbReference type="ChEBI" id="CHEBI:79216"/>
    </reaction>
    <physiologicalReaction direction="left-to-right" evidence="8">
        <dbReference type="Rhea" id="RHEA:77296"/>
    </physiologicalReaction>
</comment>
<comment type="catalytic activity">
    <reaction evidence="8">
        <text>[alpha-N-acetylneuraminyl-(2-&gt;8)](n)-alpha-N-acetylneuraminyl-(2-&gt;8)-alpha-N-acetylneuraminyl-(2-&gt;3)-beta-D-galactosyl-(1-&gt;4)-beta-D-glucosyl-(1&lt;-&gt;1)-ceramide + CMP-N-acetyl-beta-neuraminate = [alpha-N-acetylneuraminyl-(2-&gt;8)](n+1)-alpha-N-acetylneuraminyl-(2-&gt;8)-alpha-N-acetylneuraminyl-(2-&gt;3)-beta-D-galactosyl-(1-&gt;4)-beta-D-glucosyl-(1&lt;-&gt;1)-ceramide + CMP + H(+)</text>
        <dbReference type="Rhea" id="RHEA:77371"/>
        <dbReference type="Rhea" id="RHEA-COMP:18881"/>
        <dbReference type="Rhea" id="RHEA-COMP:18935"/>
        <dbReference type="ChEBI" id="CHEBI:15378"/>
        <dbReference type="ChEBI" id="CHEBI:57812"/>
        <dbReference type="ChEBI" id="CHEBI:60377"/>
        <dbReference type="ChEBI" id="CHEBI:197322"/>
    </reaction>
    <physiologicalReaction direction="left-to-right" evidence="8">
        <dbReference type="Rhea" id="RHEA:77372"/>
    </physiologicalReaction>
</comment>
<comment type="biophysicochemical properties">
    <kinetics>
        <KM evidence="9">190 uM for ganglioside GM3</KM>
        <KM evidence="3">83 uM for ganglioside GM3</KM>
        <KM evidence="9">62.5 uM for ganglioside GD1a</KM>
        <KM evidence="9">100 uM for ganglioside GT1b</KM>
        <KM evidence="3">88 uM for CMP-N-acetyl-beta-neuraminate</KM>
        <Vmax evidence="9">121.0 pmol/h/mg enzyme for ganglioside GM3</Vmax>
        <Vmax evidence="3">165.0 pmol/h/mg enzyme for ganglioside GM3</Vmax>
        <Vmax evidence="9">14.2 pmol/h/mg enzyme for ganglioside GD1a</Vmax>
        <Vmax evidence="9">20.9 pmol/h/mg enzyme for ganglioside GT1b</Vmax>
        <Vmax evidence="3">167.0 pmol/h/mg enzyme for CMP-N-acetyl-beta-neuraminate</Vmax>
    </kinetics>
</comment>
<comment type="pathway">
    <text>Protein modification; protein glycosylation.</text>
</comment>
<comment type="pathway">
    <text>Lipid metabolism; sphingolipid metabolism.</text>
</comment>
<comment type="interaction">
    <interactant intactId="EBI-21541735">
        <id>Q92185</id>
    </interactant>
    <interactant intactId="EBI-748974">
        <id>Q96CV9</id>
        <label>OPTN</label>
    </interactant>
    <organismsDiffer>false</organismsDiffer>
    <experiments>3</experiments>
</comment>
<comment type="subcellular location">
    <subcellularLocation>
        <location evidence="12">Golgi apparatus membrane</location>
        <topology evidence="12">Single-pass type II membrane protein</topology>
    </subcellularLocation>
</comment>
<comment type="alternative products">
    <event type="alternative splicing"/>
    <isoform>
        <id>Q92185-1</id>
        <name>1</name>
        <sequence type="displayed"/>
    </isoform>
    <isoform>
        <id>Q92185-2</id>
        <name>2</name>
        <name>Sat-2</name>
        <sequence type="described" ref="VSP_047583 VSP_047584"/>
    </isoform>
</comment>
<comment type="tissue specificity">
    <text evidence="5 8">Strongly expressed in melanoma cell lines, adult and fetal brain and to a lesser extent in adult and fetal lung.</text>
</comment>
<comment type="similarity">
    <text evidence="12">Belongs to the glycosyltransferase 29 family.</text>
</comment>
<comment type="sequence caution" evidence="12">
    <conflict type="erroneous initiation">
        <sequence resource="EMBL-CDS" id="AAC37586"/>
    </conflict>
    <text>Truncated N-terminus.</text>
</comment>
<comment type="online information" name="Functional Glycomics Gateway - GTase">
    <link uri="http://www.functionalglycomics.org/glycomics/molecule/jsp/glycoEnzyme/viewGlycoEnzyme.jsp?gbpId=gt_hum_636"/>
    <text>ST8Sia I</text>
</comment>
<keyword id="KW-0025">Alternative splicing</keyword>
<keyword id="KW-1015">Disulfide bond</keyword>
<keyword id="KW-0325">Glycoprotein</keyword>
<keyword id="KW-0328">Glycosyltransferase</keyword>
<keyword id="KW-0333">Golgi apparatus</keyword>
<keyword id="KW-0443">Lipid metabolism</keyword>
<keyword id="KW-0472">Membrane</keyword>
<keyword id="KW-1267">Proteomics identification</keyword>
<keyword id="KW-1185">Reference proteome</keyword>
<keyword id="KW-0735">Signal-anchor</keyword>
<keyword id="KW-0746">Sphingolipid metabolism</keyword>
<keyword id="KW-0808">Transferase</keyword>
<keyword id="KW-0812">Transmembrane</keyword>
<keyword id="KW-1133">Transmembrane helix</keyword>
<gene>
    <name evidence="16" type="primary">ST8SIA1</name>
    <name type="synonym">SIAT8</name>
    <name type="synonym">SIAT8A</name>
</gene>